<keyword id="KW-0002">3D-structure</keyword>
<keyword id="KW-0012">Acyltransferase</keyword>
<keyword id="KW-0021">Allosteric enzyme</keyword>
<keyword id="KW-0028">Amino-acid biosynthesis</keyword>
<keyword id="KW-0457">Lysine biosynthesis</keyword>
<keyword id="KW-0460">Magnesium</keyword>
<keyword id="KW-0464">Manganese</keyword>
<keyword id="KW-0479">Metal-binding</keyword>
<keyword id="KW-1185">Reference proteome</keyword>
<keyword id="KW-0808">Transferase</keyword>
<reference key="1">
    <citation type="journal article" date="2005" name="J. Bacteriol.">
        <title>The genome of Sulfolobus acidocaldarius, a model organism of the Crenarchaeota.</title>
        <authorList>
            <person name="Chen L."/>
            <person name="Bruegger K."/>
            <person name="Skovgaard M."/>
            <person name="Redder P."/>
            <person name="She Q."/>
            <person name="Torarinsson E."/>
            <person name="Greve B."/>
            <person name="Awayez M."/>
            <person name="Zibat A."/>
            <person name="Klenk H.-P."/>
            <person name="Garrett R.A."/>
        </authorList>
    </citation>
    <scope>NUCLEOTIDE SEQUENCE [LARGE SCALE GENOMIC DNA]</scope>
    <source>
        <strain>ATCC 33909 / DSM 639 / JCM 8929 / NBRC 15157 / NCIMB 11770</strain>
    </source>
</reference>
<reference key="2">
    <citation type="journal article" date="2020" name="FEBS Lett.">
        <title>Biochemical characterization of archaeal homocitrate synthase from Sulfolobus acidocaldarius.</title>
        <authorList>
            <person name="Suzuki T."/>
            <person name="Akiyama N."/>
            <person name="Yoshida A."/>
            <person name="Tomita T."/>
            <person name="Lassak K."/>
            <person name="Haurat M.F."/>
            <person name="Okada T."/>
            <person name="Takahashi K."/>
            <person name="Albers S.V."/>
            <person name="Kuzuyama T."/>
            <person name="Nishiyama M."/>
        </authorList>
    </citation>
    <scope>FUNCTION</scope>
    <scope>CATALYTIC ACTIVITY</scope>
    <scope>SUBSTRATE SPECIFICITY</scope>
    <scope>ACTIVITY REGULATION</scope>
    <scope>PATHWAY</scope>
    <scope>DOMAIN</scope>
    <scope>DISRUPTION PHENOTYPE</scope>
</reference>
<feature type="chain" id="PRO_0000448052" description="Homocitrate synthase">
    <location>
        <begin position="1"/>
        <end position="468"/>
    </location>
</feature>
<feature type="domain" description="Pyruvate carboxyltransferase" evidence="3">
    <location>
        <begin position="11"/>
        <end position="266"/>
    </location>
</feature>
<feature type="active site" description="Proton acceptor" evidence="1">
    <location>
        <position position="299"/>
    </location>
</feature>
<feature type="binding site" evidence="1">
    <location>
        <position position="19"/>
    </location>
    <ligand>
        <name>2-oxoglutarate</name>
        <dbReference type="ChEBI" id="CHEBI:16810"/>
    </ligand>
</feature>
<feature type="binding site" evidence="1">
    <location>
        <position position="20"/>
    </location>
    <ligand>
        <name>Mg(2+)</name>
        <dbReference type="ChEBI" id="CHEBI:18420"/>
    </ligand>
</feature>
<feature type="binding site" evidence="1">
    <location>
        <position position="83"/>
    </location>
    <ligand>
        <name>2-oxoglutarate</name>
        <dbReference type="ChEBI" id="CHEBI:16810"/>
    </ligand>
</feature>
<feature type="binding site" evidence="1">
    <location>
        <position position="143"/>
    </location>
    <ligand>
        <name>2-oxoglutarate</name>
        <dbReference type="ChEBI" id="CHEBI:16810"/>
    </ligand>
</feature>
<feature type="binding site" evidence="1">
    <location>
        <position position="177"/>
    </location>
    <ligand>
        <name>2-oxoglutarate</name>
        <dbReference type="ChEBI" id="CHEBI:16810"/>
    </ligand>
</feature>
<feature type="binding site" evidence="1">
    <location>
        <position position="205"/>
    </location>
    <ligand>
        <name>Mg(2+)</name>
        <dbReference type="ChEBI" id="CHEBI:18420"/>
    </ligand>
</feature>
<feature type="binding site" evidence="1">
    <location>
        <position position="207"/>
    </location>
    <ligand>
        <name>Mg(2+)</name>
        <dbReference type="ChEBI" id="CHEBI:18420"/>
    </ligand>
</feature>
<feature type="strand" evidence="7">
    <location>
        <begin position="9"/>
        <end position="15"/>
    </location>
</feature>
<feature type="turn" evidence="7">
    <location>
        <begin position="17"/>
        <end position="19"/>
    </location>
</feature>
<feature type="helix" evidence="7">
    <location>
        <begin position="20"/>
        <end position="23"/>
    </location>
</feature>
<feature type="helix" evidence="7">
    <location>
        <begin position="31"/>
        <end position="44"/>
    </location>
</feature>
<feature type="strand" evidence="7">
    <location>
        <begin position="47"/>
        <end position="52"/>
    </location>
</feature>
<feature type="helix" evidence="7">
    <location>
        <begin position="58"/>
        <end position="72"/>
    </location>
</feature>
<feature type="strand" evidence="7">
    <location>
        <begin position="78"/>
        <end position="84"/>
    </location>
</feature>
<feature type="helix" evidence="7">
    <location>
        <begin position="88"/>
        <end position="96"/>
    </location>
</feature>
<feature type="strand" evidence="7">
    <location>
        <begin position="100"/>
        <end position="107"/>
    </location>
</feature>
<feature type="helix" evidence="7">
    <location>
        <begin position="110"/>
        <end position="115"/>
    </location>
</feature>
<feature type="helix" evidence="7">
    <location>
        <begin position="121"/>
        <end position="137"/>
    </location>
</feature>
<feature type="strand" evidence="7">
    <location>
        <begin position="141"/>
        <end position="147"/>
    </location>
</feature>
<feature type="helix" evidence="7">
    <location>
        <begin position="149"/>
        <end position="151"/>
    </location>
</feature>
<feature type="helix" evidence="7">
    <location>
        <begin position="154"/>
        <end position="167"/>
    </location>
</feature>
<feature type="strand" evidence="7">
    <location>
        <begin position="170"/>
        <end position="176"/>
    </location>
</feature>
<feature type="helix" evidence="7">
    <location>
        <begin position="183"/>
        <end position="196"/>
    </location>
</feature>
<feature type="strand" evidence="7">
    <location>
        <begin position="200"/>
        <end position="207"/>
    </location>
</feature>
<feature type="helix" evidence="7">
    <location>
        <begin position="213"/>
        <end position="222"/>
    </location>
</feature>
<feature type="strand" evidence="7">
    <location>
        <begin position="227"/>
        <end position="231"/>
    </location>
</feature>
<feature type="helix" evidence="7">
    <location>
        <begin position="232"/>
        <end position="234"/>
    </location>
</feature>
<feature type="helix" evidence="7">
    <location>
        <begin position="244"/>
        <end position="255"/>
    </location>
</feature>
<feature type="helix" evidence="7">
    <location>
        <begin position="262"/>
        <end position="264"/>
    </location>
</feature>
<feature type="helix" evidence="7">
    <location>
        <begin position="265"/>
        <end position="276"/>
    </location>
</feature>
<feature type="turn" evidence="7">
    <location>
        <begin position="285"/>
        <end position="287"/>
    </location>
</feature>
<feature type="turn" evidence="7">
    <location>
        <begin position="289"/>
        <end position="292"/>
    </location>
</feature>
<feature type="helix" evidence="7">
    <location>
        <begin position="297"/>
        <end position="305"/>
    </location>
</feature>
<feature type="helix" evidence="7">
    <location>
        <begin position="307"/>
        <end position="309"/>
    </location>
</feature>
<feature type="helix" evidence="7">
    <location>
        <begin position="315"/>
        <end position="318"/>
    </location>
</feature>
<feature type="helix" evidence="7">
    <location>
        <begin position="332"/>
        <end position="342"/>
    </location>
</feature>
<feature type="helix" evidence="7">
    <location>
        <begin position="348"/>
        <end position="359"/>
    </location>
</feature>
<feature type="helix" evidence="7">
    <location>
        <begin position="369"/>
        <end position="380"/>
    </location>
</feature>
<dbReference type="EC" id="2.3.3.14" evidence="4"/>
<dbReference type="EMBL" id="CP000077">
    <property type="protein sequence ID" value="AAY80642.1"/>
    <property type="molecule type" value="Genomic_DNA"/>
</dbReference>
<dbReference type="RefSeq" id="WP_011278144.1">
    <property type="nucleotide sequence ID" value="NC_007181.1"/>
</dbReference>
<dbReference type="PDB" id="6KTQ">
    <property type="method" value="X-ray"/>
    <property type="resolution" value="1.98 A"/>
    <property type="chains" value="A/B=1-382"/>
</dbReference>
<dbReference type="PDBsum" id="6KTQ"/>
<dbReference type="SMR" id="Q4J989"/>
<dbReference type="STRING" id="330779.Saci_1304"/>
<dbReference type="GeneID" id="14551809"/>
<dbReference type="KEGG" id="sai:Saci_1304"/>
<dbReference type="PATRIC" id="fig|330779.12.peg.1258"/>
<dbReference type="eggNOG" id="arCOG02092">
    <property type="taxonomic scope" value="Archaea"/>
</dbReference>
<dbReference type="HOGENOM" id="CLU_022158_4_0_2"/>
<dbReference type="BRENDA" id="2.3.3.14">
    <property type="organism ID" value="6160"/>
</dbReference>
<dbReference type="UniPathway" id="UPA00033">
    <property type="reaction ID" value="UER00028"/>
</dbReference>
<dbReference type="Proteomes" id="UP000001018">
    <property type="component" value="Chromosome"/>
</dbReference>
<dbReference type="GO" id="GO:0003852">
    <property type="term" value="F:2-isopropylmalate synthase activity"/>
    <property type="evidence" value="ECO:0007669"/>
    <property type="project" value="TreeGrafter"/>
</dbReference>
<dbReference type="GO" id="GO:0004410">
    <property type="term" value="F:homocitrate synthase activity"/>
    <property type="evidence" value="ECO:0007669"/>
    <property type="project" value="UniProtKB-UniRule"/>
</dbReference>
<dbReference type="GO" id="GO:0046872">
    <property type="term" value="F:metal ion binding"/>
    <property type="evidence" value="ECO:0007669"/>
    <property type="project" value="UniProtKB-KW"/>
</dbReference>
<dbReference type="GO" id="GO:0009098">
    <property type="term" value="P:L-leucine biosynthetic process"/>
    <property type="evidence" value="ECO:0007669"/>
    <property type="project" value="TreeGrafter"/>
</dbReference>
<dbReference type="GO" id="GO:0019878">
    <property type="term" value="P:lysine biosynthetic process via aminoadipic acid"/>
    <property type="evidence" value="ECO:0007669"/>
    <property type="project" value="UniProtKB-UniRule"/>
</dbReference>
<dbReference type="CDD" id="cd07940">
    <property type="entry name" value="DRE_TIM_IPMS"/>
    <property type="match status" value="1"/>
</dbReference>
<dbReference type="Gene3D" id="1.10.238.260">
    <property type="match status" value="1"/>
</dbReference>
<dbReference type="Gene3D" id="3.30.70.920">
    <property type="match status" value="1"/>
</dbReference>
<dbReference type="Gene3D" id="3.20.20.70">
    <property type="entry name" value="Aldolase class I"/>
    <property type="match status" value="1"/>
</dbReference>
<dbReference type="HAMAP" id="MF_02222">
    <property type="entry name" value="Homocitr_synth_fung_arch"/>
    <property type="match status" value="1"/>
</dbReference>
<dbReference type="InterPro" id="IPR050073">
    <property type="entry name" value="2-IPM_HCS-like"/>
</dbReference>
<dbReference type="InterPro" id="IPR002034">
    <property type="entry name" value="AIPM/Hcit_synth_CS"/>
</dbReference>
<dbReference type="InterPro" id="IPR013785">
    <property type="entry name" value="Aldolase_TIM"/>
</dbReference>
<dbReference type="InterPro" id="IPR011008">
    <property type="entry name" value="Dimeric_a/b-barrel"/>
</dbReference>
<dbReference type="InterPro" id="IPR011872">
    <property type="entry name" value="Homocitrate_synth"/>
</dbReference>
<dbReference type="InterPro" id="IPR054691">
    <property type="entry name" value="LeuA/HCS_post-cat"/>
</dbReference>
<dbReference type="InterPro" id="IPR000891">
    <property type="entry name" value="PYR_CT"/>
</dbReference>
<dbReference type="InterPro" id="IPR019887">
    <property type="entry name" value="Tscrpt_reg_AsnC/Lrp_C"/>
</dbReference>
<dbReference type="NCBIfam" id="TIGR02146">
    <property type="entry name" value="LysS_fung_arch"/>
    <property type="match status" value="1"/>
</dbReference>
<dbReference type="NCBIfam" id="NF002085">
    <property type="entry name" value="PRK00915.1-2"/>
    <property type="match status" value="1"/>
</dbReference>
<dbReference type="PANTHER" id="PTHR10277:SF63">
    <property type="entry name" value="HOMOCITRATE SYNTHASE"/>
    <property type="match status" value="1"/>
</dbReference>
<dbReference type="PANTHER" id="PTHR10277">
    <property type="entry name" value="HOMOCITRATE SYNTHASE-RELATED"/>
    <property type="match status" value="1"/>
</dbReference>
<dbReference type="Pfam" id="PF01037">
    <property type="entry name" value="AsnC_trans_reg"/>
    <property type="match status" value="1"/>
</dbReference>
<dbReference type="Pfam" id="PF22617">
    <property type="entry name" value="HCS_D2"/>
    <property type="match status" value="1"/>
</dbReference>
<dbReference type="Pfam" id="PF00682">
    <property type="entry name" value="HMGL-like"/>
    <property type="match status" value="1"/>
</dbReference>
<dbReference type="SUPFAM" id="SSF51569">
    <property type="entry name" value="Aldolase"/>
    <property type="match status" value="1"/>
</dbReference>
<dbReference type="SUPFAM" id="SSF54909">
    <property type="entry name" value="Dimeric alpha+beta barrel"/>
    <property type="match status" value="1"/>
</dbReference>
<dbReference type="PROSITE" id="PS00816">
    <property type="entry name" value="AIPM_HOMOCIT_SYNTH_2"/>
    <property type="match status" value="1"/>
</dbReference>
<dbReference type="PROSITE" id="PS50991">
    <property type="entry name" value="PYR_CT"/>
    <property type="match status" value="1"/>
</dbReference>
<comment type="function">
    <text evidence="4">Catalyzes the aldol-type condensation of 2-oxoglutarate with acetyl-CoA to yield homocitrate. Carries out the first step of the alpha-aminoadipate (AAA) lysine biosynthesis pathway. Does not display 2-isopropylmalate synthase and citramalate synthase activities since it cannot use 2-oxoisovalerate or pyruvate as substrate.</text>
</comment>
<comment type="catalytic activity">
    <reaction evidence="4">
        <text>acetyl-CoA + 2-oxoglutarate + H2O = (2R)-homocitrate + CoA + H(+)</text>
        <dbReference type="Rhea" id="RHEA:12929"/>
        <dbReference type="ChEBI" id="CHEBI:15377"/>
        <dbReference type="ChEBI" id="CHEBI:15378"/>
        <dbReference type="ChEBI" id="CHEBI:16810"/>
        <dbReference type="ChEBI" id="CHEBI:57287"/>
        <dbReference type="ChEBI" id="CHEBI:57288"/>
        <dbReference type="ChEBI" id="CHEBI:58884"/>
        <dbReference type="EC" id="2.3.3.14"/>
    </reaction>
    <physiologicalReaction direction="left-to-right" evidence="4">
        <dbReference type="Rhea" id="RHEA:12930"/>
    </physiologicalReaction>
</comment>
<comment type="cofactor">
    <cofactor evidence="1">
        <name>Mg(2+)</name>
        <dbReference type="ChEBI" id="CHEBI:18420"/>
    </cofactor>
    <cofactor evidence="1">
        <name>Mn(2+)</name>
        <dbReference type="ChEBI" id="CHEBI:29035"/>
    </cofactor>
</comment>
<comment type="activity regulation">
    <text evidence="4">Inhibited by lysine.</text>
</comment>
<comment type="pathway">
    <text evidence="4">Amino-acid biosynthesis; L-lysine biosynthesis via AAA pathway; L-alpha-aminoadipate from 2-oxoglutarate: step 1/5.</text>
</comment>
<comment type="domain">
    <text evidence="4">Contains an N-terminal catalytic domain fused with a RAM (Regulation of Amino acid Metabolism) domain at the C-terminus. The mutant enzyme lacking the RAM domain is insensitive to inhibition by lysine, indicating that the RAM domain is responsible for enzyme allosteric regulation.</text>
</comment>
<comment type="disruption phenotype">
    <text evidence="4">Cells lacking this gene do not grow in MM without or even with lysine, but grow in MM with the simultaneous supplementation of lysine and arginine to the medium. Furthermore, the mutant strain does not grow on MM supplemented with lysine and glutamate, but grows with lysine and ornithine.</text>
</comment>
<comment type="similarity">
    <text evidence="2">Belongs to the alpha-IPM synthase/homocitrate synthase family. Homocitrate synthase LYS20/LYS21 subfamily.</text>
</comment>
<proteinExistence type="evidence at protein level"/>
<evidence type="ECO:0000250" key="1">
    <source>
        <dbReference type="UniProtKB" id="O87198"/>
    </source>
</evidence>
<evidence type="ECO:0000255" key="2">
    <source>
        <dbReference type="HAMAP-Rule" id="MF_02222"/>
    </source>
</evidence>
<evidence type="ECO:0000255" key="3">
    <source>
        <dbReference type="PROSITE-ProRule" id="PRU01151"/>
    </source>
</evidence>
<evidence type="ECO:0000269" key="4">
    <source>
    </source>
</evidence>
<evidence type="ECO:0000303" key="5">
    <source>
    </source>
</evidence>
<evidence type="ECO:0000312" key="6">
    <source>
        <dbReference type="EMBL" id="AAY80642.1"/>
    </source>
</evidence>
<evidence type="ECO:0007829" key="7">
    <source>
        <dbReference type="PDB" id="6KTQ"/>
    </source>
</evidence>
<organism>
    <name type="scientific">Sulfolobus acidocaldarius (strain ATCC 33909 / DSM 639 / JCM 8929 / NBRC 15157 / NCIMB 11770)</name>
    <dbReference type="NCBI Taxonomy" id="330779"/>
    <lineage>
        <taxon>Archaea</taxon>
        <taxon>Thermoproteota</taxon>
        <taxon>Thermoprotei</taxon>
        <taxon>Sulfolobales</taxon>
        <taxon>Sulfolobaceae</taxon>
        <taxon>Sulfolobus</taxon>
    </lineage>
</organism>
<name>HOSA_SULAC</name>
<sequence length="468" mass="51732">MLPKKKLHMKVGILDSTLREGEQTPGVVFTTDQRVEIAKALSDIGVQMIEAGHPAVSPDIYEGIRRIIKLKREGVIKSEIVAHSRAVKRDIEVGAEIEADRIAIFYGISDTHLKAKHHTTRDEALRSIAETVSYAKSHGVKVRFTAEDATRADYQYLLEVIKTVRDAGADRVSIADTVGVLYPSRTRELFKDLTSRFPDIEFDIHAHNDLGMAVANVLAAAEGGATIIHTTLNGLGERVGIAPLQVVAAALKYHFGIEVVDLKKLSEVASLVEKYSGIALPPNFPITGDYAFVHKAGVHVAGVLNDPKTYEFLPPETFGRSRDYVIDKYTGKHAVKDRFDRLGVKLTDSEIDQVLAKIKSNPNVRFYRDVDLLELAESVTGRILKPRPPENIMALISVKCDSNVYTTSVTRRIVLIEGVREVMEISGDYDILVKVEAKDSTELNQIIESIRAVKGVKSTLTSLILKKM</sequence>
<protein>
    <recommendedName>
        <fullName evidence="5">Homocitrate synthase</fullName>
        <shortName evidence="5">HCS</shortName>
        <ecNumber evidence="4">2.3.3.14</ecNumber>
    </recommendedName>
</protein>
<gene>
    <name evidence="6" type="ordered locus">Saci_1304</name>
</gene>
<accession>Q4J989</accession>